<gene>
    <name evidence="1" type="primary">mraY</name>
    <name type="ordered locus">CAB834</name>
</gene>
<proteinExistence type="inferred from homology"/>
<evidence type="ECO:0000255" key="1">
    <source>
        <dbReference type="HAMAP-Rule" id="MF_00038"/>
    </source>
</evidence>
<name>MRAY_CHLAB</name>
<organism>
    <name type="scientific">Chlamydia abortus (strain DSM 27085 / S26/3)</name>
    <name type="common">Chlamydophila abortus</name>
    <dbReference type="NCBI Taxonomy" id="218497"/>
    <lineage>
        <taxon>Bacteria</taxon>
        <taxon>Pseudomonadati</taxon>
        <taxon>Chlamydiota</taxon>
        <taxon>Chlamydiia</taxon>
        <taxon>Chlamydiales</taxon>
        <taxon>Chlamydiaceae</taxon>
        <taxon>Chlamydia/Chlamydophila group</taxon>
        <taxon>Chlamydia</taxon>
    </lineage>
</organism>
<protein>
    <recommendedName>
        <fullName evidence="1">Phospho-N-acetylmuramoyl-pentapeptide-transferase</fullName>
        <ecNumber evidence="1">2.7.8.13</ecNumber>
    </recommendedName>
    <alternativeName>
        <fullName evidence="1">UDP-MurNAc-pentapeptide phosphotransferase</fullName>
    </alternativeName>
</protein>
<accession>Q5L520</accession>
<dbReference type="EC" id="2.7.8.13" evidence="1"/>
<dbReference type="EMBL" id="CR848038">
    <property type="protein sequence ID" value="CAH64275.1"/>
    <property type="molecule type" value="Genomic_DNA"/>
</dbReference>
<dbReference type="RefSeq" id="WP_011097362.1">
    <property type="nucleotide sequence ID" value="NC_004552.2"/>
</dbReference>
<dbReference type="SMR" id="Q5L520"/>
<dbReference type="KEGG" id="cab:CAB834"/>
<dbReference type="eggNOG" id="COG0472">
    <property type="taxonomic scope" value="Bacteria"/>
</dbReference>
<dbReference type="HOGENOM" id="CLU_023982_0_1_0"/>
<dbReference type="OrthoDB" id="9805475at2"/>
<dbReference type="UniPathway" id="UPA00219"/>
<dbReference type="Proteomes" id="UP000001012">
    <property type="component" value="Chromosome"/>
</dbReference>
<dbReference type="GO" id="GO:0005886">
    <property type="term" value="C:plasma membrane"/>
    <property type="evidence" value="ECO:0007669"/>
    <property type="project" value="UniProtKB-SubCell"/>
</dbReference>
<dbReference type="GO" id="GO:0046872">
    <property type="term" value="F:metal ion binding"/>
    <property type="evidence" value="ECO:0007669"/>
    <property type="project" value="UniProtKB-KW"/>
</dbReference>
<dbReference type="GO" id="GO:0008963">
    <property type="term" value="F:phospho-N-acetylmuramoyl-pentapeptide-transferase activity"/>
    <property type="evidence" value="ECO:0007669"/>
    <property type="project" value="UniProtKB-UniRule"/>
</dbReference>
<dbReference type="GO" id="GO:0051992">
    <property type="term" value="F:UDP-N-acetylmuramoyl-L-alanyl-D-glutamyl-meso-2,6-diaminopimelyl-D-alanyl-D-alanine:undecaprenyl-phosphate transferase activity"/>
    <property type="evidence" value="ECO:0007669"/>
    <property type="project" value="RHEA"/>
</dbReference>
<dbReference type="GO" id="GO:0051301">
    <property type="term" value="P:cell division"/>
    <property type="evidence" value="ECO:0007669"/>
    <property type="project" value="UniProtKB-KW"/>
</dbReference>
<dbReference type="GO" id="GO:0071555">
    <property type="term" value="P:cell wall organization"/>
    <property type="evidence" value="ECO:0007669"/>
    <property type="project" value="UniProtKB-KW"/>
</dbReference>
<dbReference type="GO" id="GO:0009252">
    <property type="term" value="P:peptidoglycan biosynthetic process"/>
    <property type="evidence" value="ECO:0007669"/>
    <property type="project" value="UniProtKB-UniRule"/>
</dbReference>
<dbReference type="GO" id="GO:0008360">
    <property type="term" value="P:regulation of cell shape"/>
    <property type="evidence" value="ECO:0007669"/>
    <property type="project" value="UniProtKB-KW"/>
</dbReference>
<dbReference type="CDD" id="cd06852">
    <property type="entry name" value="GT_MraY"/>
    <property type="match status" value="1"/>
</dbReference>
<dbReference type="HAMAP" id="MF_00038">
    <property type="entry name" value="MraY"/>
    <property type="match status" value="1"/>
</dbReference>
<dbReference type="InterPro" id="IPR000715">
    <property type="entry name" value="Glycosyl_transferase_4"/>
</dbReference>
<dbReference type="InterPro" id="IPR003524">
    <property type="entry name" value="PNAcMuramoyl-5peptid_Trfase"/>
</dbReference>
<dbReference type="InterPro" id="IPR018480">
    <property type="entry name" value="PNAcMuramoyl-5peptid_Trfase_CS"/>
</dbReference>
<dbReference type="NCBIfam" id="TIGR00445">
    <property type="entry name" value="mraY"/>
    <property type="match status" value="1"/>
</dbReference>
<dbReference type="PANTHER" id="PTHR22926">
    <property type="entry name" value="PHOSPHO-N-ACETYLMURAMOYL-PENTAPEPTIDE-TRANSFERASE"/>
    <property type="match status" value="1"/>
</dbReference>
<dbReference type="PANTHER" id="PTHR22926:SF5">
    <property type="entry name" value="PHOSPHO-N-ACETYLMURAMOYL-PENTAPEPTIDE-TRANSFERASE HOMOLOG"/>
    <property type="match status" value="1"/>
</dbReference>
<dbReference type="Pfam" id="PF00953">
    <property type="entry name" value="Glycos_transf_4"/>
    <property type="match status" value="1"/>
</dbReference>
<dbReference type="PROSITE" id="PS01347">
    <property type="entry name" value="MRAY_1"/>
    <property type="match status" value="1"/>
</dbReference>
<dbReference type="PROSITE" id="PS01348">
    <property type="entry name" value="MRAY_2"/>
    <property type="match status" value="1"/>
</dbReference>
<sequence>MNSGFYLHESLVFFLLTVFALAFILGIFLGKPVIRWLKKRNHYDQVQKEYCEKLEVLHQDKKYTPTAGGILFFIVLLLTIFFWLPLGKLSTWLFAFLIISWSSLGWYDDIVKKRKKKGHGISAKQKFVLQLLISAVITTAVMYIYKGTSLFYTLRVPFFGSVSLGHSVLGQVFYFILAVLAIVGTGNAVNLTDGLDGLAAGTTCMCAFGLLVVAVTSTTIPLATDIPVLLTALLGVSLAFLKYNCSPAQVFMGDTGSLLIGGVLGSCAVMLRAELLLILLGGVFVAEAGSVILQIASCRFRKKRIFLCSPLHHHYEYKGVSETQVVKRFWTAGFFCMVFGIIAALWR</sequence>
<comment type="function">
    <text evidence="1">Catalyzes the initial step of the lipid cycle reactions in the biosynthesis of the cell wall peptidoglycan: transfers peptidoglycan precursor phospho-MurNAc-pentapeptide from UDP-MurNAc-pentapeptide onto the lipid carrier undecaprenyl phosphate, yielding undecaprenyl-pyrophosphoryl-MurNAc-pentapeptide, known as lipid I.</text>
</comment>
<comment type="catalytic activity">
    <reaction evidence="1">
        <text>UDP-N-acetyl-alpha-D-muramoyl-L-alanyl-gamma-D-glutamyl-meso-2,6-diaminopimeloyl-D-alanyl-D-alanine + di-trans,octa-cis-undecaprenyl phosphate = di-trans,octa-cis-undecaprenyl diphospho-N-acetyl-alpha-D-muramoyl-L-alanyl-D-glutamyl-meso-2,6-diaminopimeloyl-D-alanyl-D-alanine + UMP</text>
        <dbReference type="Rhea" id="RHEA:28386"/>
        <dbReference type="ChEBI" id="CHEBI:57865"/>
        <dbReference type="ChEBI" id="CHEBI:60392"/>
        <dbReference type="ChEBI" id="CHEBI:61386"/>
        <dbReference type="ChEBI" id="CHEBI:61387"/>
        <dbReference type="EC" id="2.7.8.13"/>
    </reaction>
</comment>
<comment type="cofactor">
    <cofactor evidence="1">
        <name>Mg(2+)</name>
        <dbReference type="ChEBI" id="CHEBI:18420"/>
    </cofactor>
</comment>
<comment type="pathway">
    <text evidence="1">Cell wall biogenesis; peptidoglycan biosynthesis.</text>
</comment>
<comment type="subcellular location">
    <subcellularLocation>
        <location evidence="1">Cell inner membrane</location>
        <topology evidence="1">Multi-pass membrane protein</topology>
    </subcellularLocation>
</comment>
<comment type="similarity">
    <text evidence="1">Belongs to the glycosyltransferase 4 family. MraY subfamily.</text>
</comment>
<feature type="chain" id="PRO_0000235446" description="Phospho-N-acetylmuramoyl-pentapeptide-transferase">
    <location>
        <begin position="1"/>
        <end position="347"/>
    </location>
</feature>
<feature type="transmembrane region" description="Helical" evidence="1">
    <location>
        <begin position="10"/>
        <end position="30"/>
    </location>
</feature>
<feature type="transmembrane region" description="Helical" evidence="1">
    <location>
        <begin position="67"/>
        <end position="87"/>
    </location>
</feature>
<feature type="transmembrane region" description="Helical" evidence="1">
    <location>
        <begin position="91"/>
        <end position="111"/>
    </location>
</feature>
<feature type="transmembrane region" description="Helical" evidence="1">
    <location>
        <begin position="127"/>
        <end position="147"/>
    </location>
</feature>
<feature type="transmembrane region" description="Helical" evidence="1">
    <location>
        <begin position="164"/>
        <end position="184"/>
    </location>
</feature>
<feature type="transmembrane region" description="Helical" evidence="1">
    <location>
        <begin position="195"/>
        <end position="215"/>
    </location>
</feature>
<feature type="transmembrane region" description="Helical" evidence="1">
    <location>
        <begin position="220"/>
        <end position="240"/>
    </location>
</feature>
<feature type="transmembrane region" description="Helical" evidence="1">
    <location>
        <begin position="250"/>
        <end position="270"/>
    </location>
</feature>
<feature type="transmembrane region" description="Helical" evidence="1">
    <location>
        <begin position="275"/>
        <end position="295"/>
    </location>
</feature>
<feature type="transmembrane region" description="Helical" evidence="1">
    <location>
        <begin position="325"/>
        <end position="345"/>
    </location>
</feature>
<keyword id="KW-0131">Cell cycle</keyword>
<keyword id="KW-0132">Cell division</keyword>
<keyword id="KW-0997">Cell inner membrane</keyword>
<keyword id="KW-1003">Cell membrane</keyword>
<keyword id="KW-0133">Cell shape</keyword>
<keyword id="KW-0961">Cell wall biogenesis/degradation</keyword>
<keyword id="KW-0460">Magnesium</keyword>
<keyword id="KW-0472">Membrane</keyword>
<keyword id="KW-0479">Metal-binding</keyword>
<keyword id="KW-0573">Peptidoglycan synthesis</keyword>
<keyword id="KW-0808">Transferase</keyword>
<keyword id="KW-0812">Transmembrane</keyword>
<keyword id="KW-1133">Transmembrane helix</keyword>
<reference key="1">
    <citation type="journal article" date="2005" name="Genome Res.">
        <title>The Chlamydophila abortus genome sequence reveals an array of variable proteins that contribute to interspecies variation.</title>
        <authorList>
            <person name="Thomson N.R."/>
            <person name="Yeats C."/>
            <person name="Bell K."/>
            <person name="Holden M.T.G."/>
            <person name="Bentley S.D."/>
            <person name="Livingstone M."/>
            <person name="Cerdeno-Tarraga A.-M."/>
            <person name="Harris B."/>
            <person name="Doggett J."/>
            <person name="Ormond D."/>
            <person name="Mungall K."/>
            <person name="Clarke K."/>
            <person name="Feltwell T."/>
            <person name="Hance Z."/>
            <person name="Sanders M."/>
            <person name="Quail M.A."/>
            <person name="Price C."/>
            <person name="Barrell B.G."/>
            <person name="Parkhill J."/>
            <person name="Longbottom D."/>
        </authorList>
    </citation>
    <scope>NUCLEOTIDE SEQUENCE [LARGE SCALE GENOMIC DNA]</scope>
    <source>
        <strain>DSM 27085 / S26/3</strain>
    </source>
</reference>